<keyword id="KW-0028">Amino-acid biosynthesis</keyword>
<keyword id="KW-0368">Histidine biosynthesis</keyword>
<keyword id="KW-0378">Hydrolase</keyword>
<keyword id="KW-0486">Methionine biosynthesis</keyword>
<keyword id="KW-0511">Multifunctional enzyme</keyword>
<keyword id="KW-0521">NADP</keyword>
<keyword id="KW-0554">One-carbon metabolism</keyword>
<keyword id="KW-0560">Oxidoreductase</keyword>
<keyword id="KW-0658">Purine biosynthesis</keyword>
<keyword id="KW-1185">Reference proteome</keyword>
<dbReference type="EC" id="1.5.1.5" evidence="1"/>
<dbReference type="EC" id="3.5.4.9" evidence="1"/>
<dbReference type="EMBL" id="AE010299">
    <property type="protein sequence ID" value="AAM06882.1"/>
    <property type="molecule type" value="Genomic_DNA"/>
</dbReference>
<dbReference type="RefSeq" id="WP_011023435.1">
    <property type="nucleotide sequence ID" value="NC_003552.1"/>
</dbReference>
<dbReference type="SMR" id="Q8TK95"/>
<dbReference type="STRING" id="188937.MA_3519"/>
<dbReference type="EnsemblBacteria" id="AAM06882">
    <property type="protein sequence ID" value="AAM06882"/>
    <property type="gene ID" value="MA_3519"/>
</dbReference>
<dbReference type="GeneID" id="1475413"/>
<dbReference type="KEGG" id="mac:MA_3519"/>
<dbReference type="HOGENOM" id="CLU_034045_2_1_2"/>
<dbReference type="InParanoid" id="Q8TK95"/>
<dbReference type="OrthoDB" id="9455at2157"/>
<dbReference type="PhylomeDB" id="Q8TK95"/>
<dbReference type="UniPathway" id="UPA00193"/>
<dbReference type="Proteomes" id="UP000002487">
    <property type="component" value="Chromosome"/>
</dbReference>
<dbReference type="GO" id="GO:0005829">
    <property type="term" value="C:cytosol"/>
    <property type="evidence" value="ECO:0000318"/>
    <property type="project" value="GO_Central"/>
</dbReference>
<dbReference type="GO" id="GO:0004477">
    <property type="term" value="F:methenyltetrahydrofolate cyclohydrolase activity"/>
    <property type="evidence" value="ECO:0000318"/>
    <property type="project" value="GO_Central"/>
</dbReference>
<dbReference type="GO" id="GO:0004488">
    <property type="term" value="F:methylenetetrahydrofolate dehydrogenase (NADP+) activity"/>
    <property type="evidence" value="ECO:0000318"/>
    <property type="project" value="GO_Central"/>
</dbReference>
<dbReference type="GO" id="GO:0000105">
    <property type="term" value="P:L-histidine biosynthetic process"/>
    <property type="evidence" value="ECO:0007669"/>
    <property type="project" value="UniProtKB-KW"/>
</dbReference>
<dbReference type="GO" id="GO:0009086">
    <property type="term" value="P:methionine biosynthetic process"/>
    <property type="evidence" value="ECO:0007669"/>
    <property type="project" value="UniProtKB-KW"/>
</dbReference>
<dbReference type="GO" id="GO:0006164">
    <property type="term" value="P:purine nucleotide biosynthetic process"/>
    <property type="evidence" value="ECO:0007669"/>
    <property type="project" value="UniProtKB-KW"/>
</dbReference>
<dbReference type="GO" id="GO:0035999">
    <property type="term" value="P:tetrahydrofolate interconversion"/>
    <property type="evidence" value="ECO:0000318"/>
    <property type="project" value="GO_Central"/>
</dbReference>
<dbReference type="CDD" id="cd01080">
    <property type="entry name" value="NAD_bind_m-THF_DH_Cyclohyd"/>
    <property type="match status" value="1"/>
</dbReference>
<dbReference type="FunFam" id="3.40.50.720:FF:000094">
    <property type="entry name" value="Bifunctional protein FolD"/>
    <property type="match status" value="1"/>
</dbReference>
<dbReference type="FunFam" id="3.40.50.10860:FF:000005">
    <property type="entry name" value="C-1-tetrahydrofolate synthase, cytoplasmic, putative"/>
    <property type="match status" value="1"/>
</dbReference>
<dbReference type="Gene3D" id="3.40.50.10860">
    <property type="entry name" value="Leucine Dehydrogenase, chain A, domain 1"/>
    <property type="match status" value="1"/>
</dbReference>
<dbReference type="Gene3D" id="3.40.50.720">
    <property type="entry name" value="NAD(P)-binding Rossmann-like Domain"/>
    <property type="match status" value="1"/>
</dbReference>
<dbReference type="HAMAP" id="MF_01576">
    <property type="entry name" value="THF_DHG_CYH"/>
    <property type="match status" value="1"/>
</dbReference>
<dbReference type="InterPro" id="IPR046346">
    <property type="entry name" value="Aminoacid_DH-like_N_sf"/>
</dbReference>
<dbReference type="InterPro" id="IPR036291">
    <property type="entry name" value="NAD(P)-bd_dom_sf"/>
</dbReference>
<dbReference type="InterPro" id="IPR000672">
    <property type="entry name" value="THF_DH/CycHdrlase"/>
</dbReference>
<dbReference type="InterPro" id="IPR020630">
    <property type="entry name" value="THF_DH/CycHdrlase_cat_dom"/>
</dbReference>
<dbReference type="InterPro" id="IPR020867">
    <property type="entry name" value="THF_DH/CycHdrlase_CS"/>
</dbReference>
<dbReference type="InterPro" id="IPR020631">
    <property type="entry name" value="THF_DH/CycHdrlase_NAD-bd_dom"/>
</dbReference>
<dbReference type="NCBIfam" id="NF010773">
    <property type="entry name" value="PRK14176.1"/>
    <property type="match status" value="1"/>
</dbReference>
<dbReference type="PANTHER" id="PTHR48099:SF5">
    <property type="entry name" value="C-1-TETRAHYDROFOLATE SYNTHASE, CYTOPLASMIC"/>
    <property type="match status" value="1"/>
</dbReference>
<dbReference type="PANTHER" id="PTHR48099">
    <property type="entry name" value="C-1-TETRAHYDROFOLATE SYNTHASE, CYTOPLASMIC-RELATED"/>
    <property type="match status" value="1"/>
</dbReference>
<dbReference type="Pfam" id="PF00763">
    <property type="entry name" value="THF_DHG_CYH"/>
    <property type="match status" value="1"/>
</dbReference>
<dbReference type="Pfam" id="PF02882">
    <property type="entry name" value="THF_DHG_CYH_C"/>
    <property type="match status" value="1"/>
</dbReference>
<dbReference type="PRINTS" id="PR00085">
    <property type="entry name" value="THFDHDRGNASE"/>
</dbReference>
<dbReference type="SUPFAM" id="SSF53223">
    <property type="entry name" value="Aminoacid dehydrogenase-like, N-terminal domain"/>
    <property type="match status" value="1"/>
</dbReference>
<dbReference type="SUPFAM" id="SSF51735">
    <property type="entry name" value="NAD(P)-binding Rossmann-fold domains"/>
    <property type="match status" value="1"/>
</dbReference>
<dbReference type="PROSITE" id="PS00766">
    <property type="entry name" value="THF_DHG_CYH_1"/>
    <property type="match status" value="1"/>
</dbReference>
<dbReference type="PROSITE" id="PS00767">
    <property type="entry name" value="THF_DHG_CYH_2"/>
    <property type="match status" value="1"/>
</dbReference>
<feature type="chain" id="PRO_0000268583" description="Bifunctional protein FolD">
    <location>
        <begin position="1"/>
        <end position="290"/>
    </location>
</feature>
<feature type="binding site" evidence="1">
    <location>
        <begin position="174"/>
        <end position="176"/>
    </location>
    <ligand>
        <name>NADP(+)</name>
        <dbReference type="ChEBI" id="CHEBI:58349"/>
    </ligand>
</feature>
<feature type="binding site" evidence="1">
    <location>
        <position position="199"/>
    </location>
    <ligand>
        <name>NADP(+)</name>
        <dbReference type="ChEBI" id="CHEBI:58349"/>
    </ligand>
</feature>
<feature type="binding site" evidence="1">
    <location>
        <position position="240"/>
    </location>
    <ligand>
        <name>NADP(+)</name>
        <dbReference type="ChEBI" id="CHEBI:58349"/>
    </ligand>
</feature>
<protein>
    <recommendedName>
        <fullName evidence="1">Bifunctional protein FolD</fullName>
    </recommendedName>
    <domain>
        <recommendedName>
            <fullName evidence="1">Methylenetetrahydrofolate dehydrogenase</fullName>
            <ecNumber evidence="1">1.5.1.5</ecNumber>
        </recommendedName>
    </domain>
    <domain>
        <recommendedName>
            <fullName evidence="1">Methenyltetrahydrofolate cyclohydrolase</fullName>
            <ecNumber evidence="1">3.5.4.9</ecNumber>
        </recommendedName>
    </domain>
</protein>
<evidence type="ECO:0000255" key="1">
    <source>
        <dbReference type="HAMAP-Rule" id="MF_01576"/>
    </source>
</evidence>
<sequence length="290" mass="31427">MSDESYESRIIDGKVLAQQVEEEVRSGVEDLESNRGIVPGLATILVGDDPASKMYVRLKHRACERVGIKAEDYLLPGDATQEELLTLIDSLNKNKDVHAILLQLPLPKHFSPQETQEAMEAISPTKDADGFHPYNMGKLMIGDEDLVPCTPHGVIRALEEYGVSVQGKNAVIVGHSNVVGKPMAAMLLNRNATVSVCHIFTDDLKKYTLGADIIVVATGVKHLIKADMVKEGTVIFDAGITKEEDGVYGDVDFENVIKKASLVTPVPGGVGPMTIAMLMKHVLLCAEKSL</sequence>
<accession>Q8TK95</accession>
<gene>
    <name evidence="1" type="primary">folD</name>
    <name type="ordered locus">MA_3519</name>
</gene>
<organism>
    <name type="scientific">Methanosarcina acetivorans (strain ATCC 35395 / DSM 2834 / JCM 12185 / C2A)</name>
    <dbReference type="NCBI Taxonomy" id="188937"/>
    <lineage>
        <taxon>Archaea</taxon>
        <taxon>Methanobacteriati</taxon>
        <taxon>Methanobacteriota</taxon>
        <taxon>Stenosarchaea group</taxon>
        <taxon>Methanomicrobia</taxon>
        <taxon>Methanosarcinales</taxon>
        <taxon>Methanosarcinaceae</taxon>
        <taxon>Methanosarcina</taxon>
    </lineage>
</organism>
<reference key="1">
    <citation type="journal article" date="2002" name="Genome Res.">
        <title>The genome of Methanosarcina acetivorans reveals extensive metabolic and physiological diversity.</title>
        <authorList>
            <person name="Galagan J.E."/>
            <person name="Nusbaum C."/>
            <person name="Roy A."/>
            <person name="Endrizzi M.G."/>
            <person name="Macdonald P."/>
            <person name="FitzHugh W."/>
            <person name="Calvo S."/>
            <person name="Engels R."/>
            <person name="Smirnov S."/>
            <person name="Atnoor D."/>
            <person name="Brown A."/>
            <person name="Allen N."/>
            <person name="Naylor J."/>
            <person name="Stange-Thomann N."/>
            <person name="DeArellano K."/>
            <person name="Johnson R."/>
            <person name="Linton L."/>
            <person name="McEwan P."/>
            <person name="McKernan K."/>
            <person name="Talamas J."/>
            <person name="Tirrell A."/>
            <person name="Ye W."/>
            <person name="Zimmer A."/>
            <person name="Barber R.D."/>
            <person name="Cann I."/>
            <person name="Graham D.E."/>
            <person name="Grahame D.A."/>
            <person name="Guss A.M."/>
            <person name="Hedderich R."/>
            <person name="Ingram-Smith C."/>
            <person name="Kuettner H.C."/>
            <person name="Krzycki J.A."/>
            <person name="Leigh J.A."/>
            <person name="Li W."/>
            <person name="Liu J."/>
            <person name="Mukhopadhyay B."/>
            <person name="Reeve J.N."/>
            <person name="Smith K."/>
            <person name="Springer T.A."/>
            <person name="Umayam L.A."/>
            <person name="White O."/>
            <person name="White R.H."/>
            <person name="de Macario E.C."/>
            <person name="Ferry J.G."/>
            <person name="Jarrell K.F."/>
            <person name="Jing H."/>
            <person name="Macario A.J.L."/>
            <person name="Paulsen I.T."/>
            <person name="Pritchett M."/>
            <person name="Sowers K.R."/>
            <person name="Swanson R.V."/>
            <person name="Zinder S.H."/>
            <person name="Lander E."/>
            <person name="Metcalf W.W."/>
            <person name="Birren B."/>
        </authorList>
    </citation>
    <scope>NUCLEOTIDE SEQUENCE [LARGE SCALE GENOMIC DNA]</scope>
    <source>
        <strain>ATCC 35395 / DSM 2834 / JCM 12185 / C2A</strain>
    </source>
</reference>
<proteinExistence type="inferred from homology"/>
<name>FOLD_METAC</name>
<comment type="function">
    <text evidence="1">Catalyzes the oxidation of 5,10-methylenetetrahydrofolate to 5,10-methenyltetrahydrofolate and then the hydrolysis of 5,10-methenyltetrahydrofolate to 10-formyltetrahydrofolate.</text>
</comment>
<comment type="catalytic activity">
    <reaction evidence="1">
        <text>(6R)-5,10-methylene-5,6,7,8-tetrahydrofolate + NADP(+) = (6R)-5,10-methenyltetrahydrofolate + NADPH</text>
        <dbReference type="Rhea" id="RHEA:22812"/>
        <dbReference type="ChEBI" id="CHEBI:15636"/>
        <dbReference type="ChEBI" id="CHEBI:57455"/>
        <dbReference type="ChEBI" id="CHEBI:57783"/>
        <dbReference type="ChEBI" id="CHEBI:58349"/>
        <dbReference type="EC" id="1.5.1.5"/>
    </reaction>
</comment>
<comment type="catalytic activity">
    <reaction evidence="1">
        <text>(6R)-5,10-methenyltetrahydrofolate + H2O = (6R)-10-formyltetrahydrofolate + H(+)</text>
        <dbReference type="Rhea" id="RHEA:23700"/>
        <dbReference type="ChEBI" id="CHEBI:15377"/>
        <dbReference type="ChEBI" id="CHEBI:15378"/>
        <dbReference type="ChEBI" id="CHEBI:57455"/>
        <dbReference type="ChEBI" id="CHEBI:195366"/>
        <dbReference type="EC" id="3.5.4.9"/>
    </reaction>
</comment>
<comment type="pathway">
    <text evidence="1">One-carbon metabolism; tetrahydrofolate interconversion.</text>
</comment>
<comment type="subunit">
    <text evidence="1">Homodimer.</text>
</comment>
<comment type="similarity">
    <text evidence="1">Belongs to the tetrahydrofolate dehydrogenase/cyclohydrolase family.</text>
</comment>